<reference key="1">
    <citation type="journal article" date="2011" name="J. Bacteriol.">
        <title>Complete genome sequence of the Thermophilic Bacterium Exiguobacterium sp. AT1b.</title>
        <authorList>
            <person name="Vishnivetskaya T.A."/>
            <person name="Lucas S."/>
            <person name="Copeland A."/>
            <person name="Lapidus A."/>
            <person name="Glavina del Rio T."/>
            <person name="Dalin E."/>
            <person name="Tice H."/>
            <person name="Bruce D.C."/>
            <person name="Goodwin L.A."/>
            <person name="Pitluck S."/>
            <person name="Saunders E."/>
            <person name="Brettin T."/>
            <person name="Detter C."/>
            <person name="Han C."/>
            <person name="Larimer F."/>
            <person name="Land M.L."/>
            <person name="Hauser L.J."/>
            <person name="Kyrpides N.C."/>
            <person name="Ovchinnikova G."/>
            <person name="Kathariou S."/>
            <person name="Ramaley R.F."/>
            <person name="Rodrigues D.F."/>
            <person name="Hendrix C."/>
            <person name="Richardson P."/>
            <person name="Tiedje J.M."/>
        </authorList>
    </citation>
    <scope>NUCLEOTIDE SEQUENCE [LARGE SCALE GENOMIC DNA]</scope>
    <source>
        <strain>ATCC BAA-1283 / AT1b</strain>
    </source>
</reference>
<proteinExistence type="inferred from homology"/>
<evidence type="ECO:0000255" key="1">
    <source>
        <dbReference type="HAMAP-Rule" id="MF_02119"/>
    </source>
</evidence>
<evidence type="ECO:0000255" key="2">
    <source>
        <dbReference type="PROSITE-ProRule" id="PRU01067"/>
    </source>
</evidence>
<gene>
    <name evidence="1" type="primary">lipL</name>
    <name type="ordered locus">EAT1b_1400</name>
</gene>
<organism>
    <name type="scientific">Exiguobacterium sp. (strain ATCC BAA-1283 / AT1b)</name>
    <dbReference type="NCBI Taxonomy" id="360911"/>
    <lineage>
        <taxon>Bacteria</taxon>
        <taxon>Bacillati</taxon>
        <taxon>Bacillota</taxon>
        <taxon>Bacilli</taxon>
        <taxon>Bacillales</taxon>
        <taxon>Bacillales Family XII. Incertae Sedis</taxon>
        <taxon>Exiguobacterium</taxon>
    </lineage>
</organism>
<keyword id="KW-0012">Acyltransferase</keyword>
<keyword id="KW-0808">Transferase</keyword>
<comment type="function">
    <text evidence="1">Catalyzes the amidotransfer (transamidation) of the octanoyl moiety from octanoyl-GcvH to the lipoyl domain of the E2 subunit of lipoate-dependent enzymes.</text>
</comment>
<comment type="catalytic activity">
    <reaction evidence="1">
        <text>N(6)-octanoyl-L-lysyl-[glycine-cleavage complex H protein] + L-lysyl-[lipoyl-carrier protein] = N(6)-octanoyl-L-lysyl-[lipoyl-carrier protein] + L-lysyl-[glycine-cleavage complex H protein]</text>
        <dbReference type="Rhea" id="RHEA:20213"/>
        <dbReference type="Rhea" id="RHEA-COMP:10500"/>
        <dbReference type="Rhea" id="RHEA-COMP:10501"/>
        <dbReference type="Rhea" id="RHEA-COMP:10503"/>
        <dbReference type="Rhea" id="RHEA-COMP:10504"/>
        <dbReference type="ChEBI" id="CHEBI:29969"/>
        <dbReference type="ChEBI" id="CHEBI:78809"/>
        <dbReference type="EC" id="2.3.1.204"/>
    </reaction>
</comment>
<comment type="pathway">
    <text evidence="1">Protein modification; protein lipoylation via endogenous pathway; protein N(6)-(lipoyl)lysine from octanoyl-[acyl-carrier-protein].</text>
</comment>
<comment type="miscellaneous">
    <text evidence="1">The reaction proceeds via a thioester-linked acyl-enzyme intermediate.</text>
</comment>
<comment type="similarity">
    <text evidence="1">Belongs to the octanoyltransferase LipL family.</text>
</comment>
<name>LIPL_EXISA</name>
<protein>
    <recommendedName>
        <fullName evidence="1">Octanoyl-[GcvH]:protein N-octanoyltransferase</fullName>
        <ecNumber evidence="1">2.3.1.204</ecNumber>
    </recommendedName>
    <alternativeName>
        <fullName evidence="1">Octanoyl-[GcvH]:E2 amidotransferase</fullName>
    </alternativeName>
</protein>
<feature type="chain" id="PRO_0000410840" description="Octanoyl-[GcvH]:protein N-octanoyltransferase">
    <location>
        <begin position="1"/>
        <end position="280"/>
    </location>
</feature>
<feature type="domain" description="BPL/LPL catalytic" evidence="2">
    <location>
        <begin position="40"/>
        <end position="245"/>
    </location>
</feature>
<feature type="active site" description="Acyl-thioester intermediate" evidence="1">
    <location>
        <position position="144"/>
    </location>
</feature>
<feature type="site" description="Lowers pKa of active site Cys" evidence="1">
    <location>
        <position position="156"/>
    </location>
</feature>
<dbReference type="EC" id="2.3.1.204" evidence="1"/>
<dbReference type="EMBL" id="CP001615">
    <property type="protein sequence ID" value="ACQ70327.1"/>
    <property type="molecule type" value="Genomic_DNA"/>
</dbReference>
<dbReference type="RefSeq" id="WP_012727446.1">
    <property type="nucleotide sequence ID" value="NC_012673.1"/>
</dbReference>
<dbReference type="SMR" id="C4KZ14"/>
<dbReference type="STRING" id="360911.EAT1b_1400"/>
<dbReference type="KEGG" id="eat:EAT1b_1400"/>
<dbReference type="eggNOG" id="COG0095">
    <property type="taxonomic scope" value="Bacteria"/>
</dbReference>
<dbReference type="HOGENOM" id="CLU_067270_0_0_9"/>
<dbReference type="OrthoDB" id="2080934at2"/>
<dbReference type="Proteomes" id="UP000000716">
    <property type="component" value="Chromosome"/>
</dbReference>
<dbReference type="GO" id="GO:0033819">
    <property type="term" value="F:lipoyl(octanoyl) transferase activity"/>
    <property type="evidence" value="ECO:0007669"/>
    <property type="project" value="InterPro"/>
</dbReference>
<dbReference type="GO" id="GO:0009107">
    <property type="term" value="P:lipoate biosynthetic process"/>
    <property type="evidence" value="ECO:0007669"/>
    <property type="project" value="UniProtKB-UniRule"/>
</dbReference>
<dbReference type="GO" id="GO:0036211">
    <property type="term" value="P:protein modification process"/>
    <property type="evidence" value="ECO:0007669"/>
    <property type="project" value="InterPro"/>
</dbReference>
<dbReference type="CDD" id="cd16443">
    <property type="entry name" value="LplA"/>
    <property type="match status" value="1"/>
</dbReference>
<dbReference type="Gene3D" id="3.30.930.10">
    <property type="entry name" value="Bira Bifunctional Protein, Domain 2"/>
    <property type="match status" value="1"/>
</dbReference>
<dbReference type="HAMAP" id="MF_02119">
    <property type="entry name" value="LipL"/>
    <property type="match status" value="1"/>
</dbReference>
<dbReference type="InterPro" id="IPR045864">
    <property type="entry name" value="aa-tRNA-synth_II/BPL/LPL"/>
</dbReference>
<dbReference type="InterPro" id="IPR004143">
    <property type="entry name" value="BPL_LPL_catalytic"/>
</dbReference>
<dbReference type="InterPro" id="IPR024897">
    <property type="entry name" value="LipL"/>
</dbReference>
<dbReference type="InterPro" id="IPR050664">
    <property type="entry name" value="Octanoyltrans_LipM/LipL"/>
</dbReference>
<dbReference type="PANTHER" id="PTHR43679:SF2">
    <property type="entry name" value="OCTANOYL-[GCVH]:PROTEIN N-OCTANOYLTRANSFERASE"/>
    <property type="match status" value="1"/>
</dbReference>
<dbReference type="PANTHER" id="PTHR43679">
    <property type="entry name" value="OCTANOYLTRANSFERASE LIPM-RELATED"/>
    <property type="match status" value="1"/>
</dbReference>
<dbReference type="Pfam" id="PF21948">
    <property type="entry name" value="LplA-B_cat"/>
    <property type="match status" value="1"/>
</dbReference>
<dbReference type="SUPFAM" id="SSF55681">
    <property type="entry name" value="Class II aaRS and biotin synthetases"/>
    <property type="match status" value="1"/>
</dbReference>
<dbReference type="PROSITE" id="PS51733">
    <property type="entry name" value="BPL_LPL_CATALYTIC"/>
    <property type="match status" value="1"/>
</dbReference>
<accession>C4KZ14</accession>
<sequence length="280" mass="31245">MIHPLLQQPSYRIIDQSSLGTMFQAEQSFATDDTLCASTQERGAVLRAWVHTDTIVLGIQDARLPHLKEGIRYLHEQGFRPVVRNSGGLAVVLDDDVLNLSLILPEKDGIQIDSGYEAMTSLIQHMFQDVTNDIVPGEVVGSYCPGSFDLSIDGKKFAGISQRRVRGGVAVQIYLSVRQSGSARAEIIRDFYDLAIQGEETKFTYPTIVPETMASLEDLLGIPLTVQDVLTRAYRVLSTVSLLQNATLTADEQTMFASQLERMWKRNEPLRDIEQQLTEE</sequence>